<reference key="1">
    <citation type="journal article" date="1994" name="J. Exp. Med.">
        <title>Genetic locus for the biosynthesis of the variable portion of Neisseria gonorrhoeae lipooligosaccharide.</title>
        <authorList>
            <person name="Gotschlich E.C."/>
        </authorList>
    </citation>
    <scope>NUCLEOTIDE SEQUENCE [GENOMIC DNA]</scope>
    <source>
        <strain>ATCC 33084 / F62 / M-1914</strain>
    </source>
</reference>
<gene>
    <name type="primary">glyS</name>
</gene>
<dbReference type="EC" id="6.1.1.14"/>
<dbReference type="EMBL" id="U14554">
    <property type="protein sequence ID" value="AAA68008.1"/>
    <property type="molecule type" value="Genomic_DNA"/>
</dbReference>
<dbReference type="SMR" id="Q50945"/>
<dbReference type="GO" id="GO:0005829">
    <property type="term" value="C:cytosol"/>
    <property type="evidence" value="ECO:0007669"/>
    <property type="project" value="TreeGrafter"/>
</dbReference>
<dbReference type="GO" id="GO:0004814">
    <property type="term" value="F:arginine-tRNA ligase activity"/>
    <property type="evidence" value="ECO:0007669"/>
    <property type="project" value="InterPro"/>
</dbReference>
<dbReference type="GO" id="GO:0005524">
    <property type="term" value="F:ATP binding"/>
    <property type="evidence" value="ECO:0007669"/>
    <property type="project" value="UniProtKB-KW"/>
</dbReference>
<dbReference type="GO" id="GO:0004820">
    <property type="term" value="F:glycine-tRNA ligase activity"/>
    <property type="evidence" value="ECO:0007669"/>
    <property type="project" value="UniProtKB-EC"/>
</dbReference>
<dbReference type="GO" id="GO:0006420">
    <property type="term" value="P:arginyl-tRNA aminoacylation"/>
    <property type="evidence" value="ECO:0007669"/>
    <property type="project" value="InterPro"/>
</dbReference>
<dbReference type="GO" id="GO:0006426">
    <property type="term" value="P:glycyl-tRNA aminoacylation"/>
    <property type="evidence" value="ECO:0007669"/>
    <property type="project" value="InterPro"/>
</dbReference>
<dbReference type="InterPro" id="IPR008909">
    <property type="entry name" value="DALR_anticod-bd"/>
</dbReference>
<dbReference type="InterPro" id="IPR006194">
    <property type="entry name" value="Gly-tRNA-synth_heterodimer"/>
</dbReference>
<dbReference type="PANTHER" id="PTHR30075:SF2">
    <property type="entry name" value="GLYCINE--TRNA LIGASE, CHLOROPLASTIC_MITOCHONDRIAL 2"/>
    <property type="match status" value="1"/>
</dbReference>
<dbReference type="PANTHER" id="PTHR30075">
    <property type="entry name" value="GLYCYL-TRNA SYNTHETASE"/>
    <property type="match status" value="1"/>
</dbReference>
<dbReference type="Pfam" id="PF05746">
    <property type="entry name" value="DALR_1"/>
    <property type="match status" value="1"/>
</dbReference>
<dbReference type="PROSITE" id="PS50861">
    <property type="entry name" value="AA_TRNA_LIGASE_II_GLYAB"/>
    <property type="match status" value="1"/>
</dbReference>
<feature type="chain" id="PRO_0000072914" description="Glycine--tRNA ligase beta subunit">
    <location>
        <begin position="1" status="less than"/>
        <end position="126"/>
    </location>
</feature>
<feature type="non-terminal residue">
    <location>
        <position position="1"/>
    </location>
</feature>
<name>SYGB_NEIGO</name>
<organism>
    <name type="scientific">Neisseria gonorrhoeae</name>
    <dbReference type="NCBI Taxonomy" id="485"/>
    <lineage>
        <taxon>Bacteria</taxon>
        <taxon>Pseudomonadati</taxon>
        <taxon>Pseudomonadota</taxon>
        <taxon>Betaproteobacteria</taxon>
        <taxon>Neisseriales</taxon>
        <taxon>Neisseriaceae</taxon>
        <taxon>Neisseria</taxon>
    </lineage>
</organism>
<keyword id="KW-0030">Aminoacyl-tRNA synthetase</keyword>
<keyword id="KW-0067">ATP-binding</keyword>
<keyword id="KW-0963">Cytoplasm</keyword>
<keyword id="KW-0436">Ligase</keyword>
<keyword id="KW-0547">Nucleotide-binding</keyword>
<keyword id="KW-0648">Protein biosynthesis</keyword>
<protein>
    <recommendedName>
        <fullName>Glycine--tRNA ligase beta subunit</fullName>
        <ecNumber>6.1.1.14</ecNumber>
    </recommendedName>
    <alternativeName>
        <fullName>Glycyl-tRNA synthetase beta subunit</fullName>
        <shortName>GlyRS</shortName>
    </alternativeName>
</protein>
<evidence type="ECO:0000250" key="1"/>
<evidence type="ECO:0000305" key="2"/>
<sequence>LQAVAVFKQLPEAAALAAANKRVQNLLKKADAALGEVNESLLQQDEEKALYAAAQGLQPKIAAAVAEGNFRTALSELASVKPQVDAFFDGVMVMAEDAAVKQNRLNLLNRLAEQMNAVADIALLGE</sequence>
<accession>Q50945</accession>
<proteinExistence type="inferred from homology"/>
<comment type="catalytic activity">
    <reaction>
        <text>tRNA(Gly) + glycine + ATP = glycyl-tRNA(Gly) + AMP + diphosphate</text>
        <dbReference type="Rhea" id="RHEA:16013"/>
        <dbReference type="Rhea" id="RHEA-COMP:9664"/>
        <dbReference type="Rhea" id="RHEA-COMP:9683"/>
        <dbReference type="ChEBI" id="CHEBI:30616"/>
        <dbReference type="ChEBI" id="CHEBI:33019"/>
        <dbReference type="ChEBI" id="CHEBI:57305"/>
        <dbReference type="ChEBI" id="CHEBI:78442"/>
        <dbReference type="ChEBI" id="CHEBI:78522"/>
        <dbReference type="ChEBI" id="CHEBI:456215"/>
        <dbReference type="EC" id="6.1.1.14"/>
    </reaction>
</comment>
<comment type="subunit">
    <text evidence="1">Tetramer of two alpha and two beta subunits.</text>
</comment>
<comment type="subcellular location">
    <subcellularLocation>
        <location evidence="1">Cytoplasm</location>
    </subcellularLocation>
</comment>
<comment type="similarity">
    <text evidence="2">Belongs to the class-II aminoacyl-tRNA synthetase family.</text>
</comment>